<protein>
    <recommendedName>
        <fullName>Ornithine carbamoyltransferase, catabolic</fullName>
        <shortName>OTCase</shortName>
        <ecNumber>2.1.3.3</ecNumber>
    </recommendedName>
</protein>
<reference key="1">
    <citation type="journal article" date="2002" name="Environ. Microbiol.">
        <title>Complete genome sequence and comparative analysis of the metabolically versatile Pseudomonas putida KT2440.</title>
        <authorList>
            <person name="Nelson K.E."/>
            <person name="Weinel C."/>
            <person name="Paulsen I.T."/>
            <person name="Dodson R.J."/>
            <person name="Hilbert H."/>
            <person name="Martins dos Santos V.A.P."/>
            <person name="Fouts D.E."/>
            <person name="Gill S.R."/>
            <person name="Pop M."/>
            <person name="Holmes M."/>
            <person name="Brinkac L.M."/>
            <person name="Beanan M.J."/>
            <person name="DeBoy R.T."/>
            <person name="Daugherty S.C."/>
            <person name="Kolonay J.F."/>
            <person name="Madupu R."/>
            <person name="Nelson W.C."/>
            <person name="White O."/>
            <person name="Peterson J.D."/>
            <person name="Khouri H.M."/>
            <person name="Hance I."/>
            <person name="Chris Lee P."/>
            <person name="Holtzapple E.K."/>
            <person name="Scanlan D."/>
            <person name="Tran K."/>
            <person name="Moazzez A."/>
            <person name="Utterback T.R."/>
            <person name="Rizzo M."/>
            <person name="Lee K."/>
            <person name="Kosack D."/>
            <person name="Moestl D."/>
            <person name="Wedler H."/>
            <person name="Lauber J."/>
            <person name="Stjepandic D."/>
            <person name="Hoheisel J."/>
            <person name="Straetz M."/>
            <person name="Heim S."/>
            <person name="Kiewitz C."/>
            <person name="Eisen J.A."/>
            <person name="Timmis K.N."/>
            <person name="Duesterhoeft A."/>
            <person name="Tuemmler B."/>
            <person name="Fraser C.M."/>
        </authorList>
    </citation>
    <scope>NUCLEOTIDE SEQUENCE [LARGE SCALE GENOMIC DNA]</scope>
    <source>
        <strain>ATCC 47054 / DSM 6125 / CFBP 8728 / NCIMB 11950 / KT2440</strain>
    </source>
</reference>
<proteinExistence type="inferred from homology"/>
<comment type="function">
    <text evidence="1">Reversibly catalyzes the transfer of the carbamoyl group from carbamoyl phosphate (CP) to the N(epsilon) atom of ornithine (ORN) to produce L-citrulline.</text>
</comment>
<comment type="catalytic activity">
    <reaction>
        <text>carbamoyl phosphate + L-ornithine = L-citrulline + phosphate + H(+)</text>
        <dbReference type="Rhea" id="RHEA:19513"/>
        <dbReference type="ChEBI" id="CHEBI:15378"/>
        <dbReference type="ChEBI" id="CHEBI:43474"/>
        <dbReference type="ChEBI" id="CHEBI:46911"/>
        <dbReference type="ChEBI" id="CHEBI:57743"/>
        <dbReference type="ChEBI" id="CHEBI:58228"/>
        <dbReference type="EC" id="2.1.3.3"/>
    </reaction>
</comment>
<comment type="pathway">
    <text>Amino-acid degradation; L-arginine degradation via ADI pathway; carbamoyl phosphate from L-arginine: step 2/2.</text>
</comment>
<comment type="subcellular location">
    <subcellularLocation>
        <location evidence="1">Cytoplasm</location>
    </subcellularLocation>
</comment>
<comment type="similarity">
    <text evidence="3">Belongs to the aspartate/ornithine carbamoyltransferase superfamily. OTCase family.</text>
</comment>
<gene>
    <name type="primary">arcB</name>
    <name type="ordered locus">PP_1000</name>
</gene>
<name>OTCC_PSEPK</name>
<organism>
    <name type="scientific">Pseudomonas putida (strain ATCC 47054 / DSM 6125 / CFBP 8728 / NCIMB 11950 / KT2440)</name>
    <dbReference type="NCBI Taxonomy" id="160488"/>
    <lineage>
        <taxon>Bacteria</taxon>
        <taxon>Pseudomonadati</taxon>
        <taxon>Pseudomonadota</taxon>
        <taxon>Gammaproteobacteria</taxon>
        <taxon>Pseudomonadales</taxon>
        <taxon>Pseudomonadaceae</taxon>
        <taxon>Pseudomonas</taxon>
    </lineage>
</organism>
<feature type="initiator methionine" description="Removed" evidence="1">
    <location>
        <position position="1"/>
    </location>
</feature>
<feature type="chain" id="PRO_0000112989" description="Ornithine carbamoyltransferase, catabolic">
    <location>
        <begin position="2"/>
        <end position="336"/>
    </location>
</feature>
<feature type="binding site" evidence="2">
    <location>
        <begin position="57"/>
        <end position="60"/>
    </location>
    <ligand>
        <name>carbamoyl phosphate</name>
        <dbReference type="ChEBI" id="CHEBI:58228"/>
    </ligand>
</feature>
<feature type="binding site" evidence="2">
    <location>
        <position position="84"/>
    </location>
    <ligand>
        <name>carbamoyl phosphate</name>
        <dbReference type="ChEBI" id="CHEBI:58228"/>
    </ligand>
</feature>
<feature type="binding site" evidence="2">
    <location>
        <position position="108"/>
    </location>
    <ligand>
        <name>carbamoyl phosphate</name>
        <dbReference type="ChEBI" id="CHEBI:58228"/>
    </ligand>
</feature>
<feature type="binding site" evidence="2">
    <location>
        <begin position="135"/>
        <end position="138"/>
    </location>
    <ligand>
        <name>carbamoyl phosphate</name>
        <dbReference type="ChEBI" id="CHEBI:58228"/>
    </ligand>
</feature>
<feature type="binding site" evidence="2">
    <location>
        <position position="168"/>
    </location>
    <ligand>
        <name>L-ornithine</name>
        <dbReference type="ChEBI" id="CHEBI:46911"/>
    </ligand>
</feature>
<feature type="binding site" evidence="2">
    <location>
        <position position="232"/>
    </location>
    <ligand>
        <name>L-ornithine</name>
        <dbReference type="ChEBI" id="CHEBI:46911"/>
    </ligand>
</feature>
<feature type="binding site" evidence="2">
    <location>
        <begin position="236"/>
        <end position="237"/>
    </location>
    <ligand>
        <name>L-ornithine</name>
        <dbReference type="ChEBI" id="CHEBI:46911"/>
    </ligand>
</feature>
<feature type="binding site" evidence="2">
    <location>
        <begin position="274"/>
        <end position="275"/>
    </location>
    <ligand>
        <name>carbamoyl phosphate</name>
        <dbReference type="ChEBI" id="CHEBI:58228"/>
    </ligand>
</feature>
<feature type="binding site" evidence="2">
    <location>
        <position position="321"/>
    </location>
    <ligand>
        <name>carbamoyl phosphate</name>
        <dbReference type="ChEBI" id="CHEBI:58228"/>
    </ligand>
</feature>
<accession>Q88P53</accession>
<keyword id="KW-0056">Arginine metabolism</keyword>
<keyword id="KW-0963">Cytoplasm</keyword>
<keyword id="KW-1185">Reference proteome</keyword>
<keyword id="KW-0808">Transferase</keyword>
<dbReference type="EC" id="2.1.3.3"/>
<dbReference type="EMBL" id="AE015451">
    <property type="protein sequence ID" value="AAN66625.1"/>
    <property type="molecule type" value="Genomic_DNA"/>
</dbReference>
<dbReference type="RefSeq" id="NP_743161.1">
    <property type="nucleotide sequence ID" value="NC_002947.4"/>
</dbReference>
<dbReference type="RefSeq" id="WP_010952185.1">
    <property type="nucleotide sequence ID" value="NZ_CP169744.1"/>
</dbReference>
<dbReference type="SMR" id="Q88P53"/>
<dbReference type="STRING" id="160488.PP_1000"/>
<dbReference type="PaxDb" id="160488-PP_1000"/>
<dbReference type="KEGG" id="ppu:PP_1000"/>
<dbReference type="PATRIC" id="fig|160488.4.peg.1063"/>
<dbReference type="eggNOG" id="COG0078">
    <property type="taxonomic scope" value="Bacteria"/>
</dbReference>
<dbReference type="HOGENOM" id="CLU_043846_3_1_6"/>
<dbReference type="OrthoDB" id="9802587at2"/>
<dbReference type="PhylomeDB" id="Q88P53"/>
<dbReference type="BioCyc" id="PPUT160488:G1G01-1073-MONOMER"/>
<dbReference type="UniPathway" id="UPA00254">
    <property type="reaction ID" value="UER00365"/>
</dbReference>
<dbReference type="Proteomes" id="UP000000556">
    <property type="component" value="Chromosome"/>
</dbReference>
<dbReference type="GO" id="GO:0005737">
    <property type="term" value="C:cytoplasm"/>
    <property type="evidence" value="ECO:0007669"/>
    <property type="project" value="UniProtKB-SubCell"/>
</dbReference>
<dbReference type="GO" id="GO:0016597">
    <property type="term" value="F:amino acid binding"/>
    <property type="evidence" value="ECO:0007669"/>
    <property type="project" value="InterPro"/>
</dbReference>
<dbReference type="GO" id="GO:0004585">
    <property type="term" value="F:ornithine carbamoyltransferase activity"/>
    <property type="evidence" value="ECO:0007669"/>
    <property type="project" value="UniProtKB-UniRule"/>
</dbReference>
<dbReference type="GO" id="GO:0042450">
    <property type="term" value="P:arginine biosynthetic process via ornithine"/>
    <property type="evidence" value="ECO:0007669"/>
    <property type="project" value="TreeGrafter"/>
</dbReference>
<dbReference type="GO" id="GO:0019547">
    <property type="term" value="P:arginine catabolic process to ornithine"/>
    <property type="evidence" value="ECO:0007669"/>
    <property type="project" value="UniProtKB-UniPathway"/>
</dbReference>
<dbReference type="GO" id="GO:0019240">
    <property type="term" value="P:citrulline biosynthetic process"/>
    <property type="evidence" value="ECO:0007669"/>
    <property type="project" value="TreeGrafter"/>
</dbReference>
<dbReference type="GO" id="GO:0006526">
    <property type="term" value="P:L-arginine biosynthetic process"/>
    <property type="evidence" value="ECO:0007669"/>
    <property type="project" value="UniProtKB-UniRule"/>
</dbReference>
<dbReference type="FunFam" id="3.40.50.1370:FF:000003">
    <property type="entry name" value="Ornithine carbamoyltransferase"/>
    <property type="match status" value="1"/>
</dbReference>
<dbReference type="Gene3D" id="3.40.50.1370">
    <property type="entry name" value="Aspartate/ornithine carbamoyltransferase"/>
    <property type="match status" value="2"/>
</dbReference>
<dbReference type="HAMAP" id="MF_01109">
    <property type="entry name" value="OTCase"/>
    <property type="match status" value="1"/>
</dbReference>
<dbReference type="InterPro" id="IPR006132">
    <property type="entry name" value="Asp/Orn_carbamoyltranf_P-bd"/>
</dbReference>
<dbReference type="InterPro" id="IPR006130">
    <property type="entry name" value="Asp/Orn_carbamoylTrfase"/>
</dbReference>
<dbReference type="InterPro" id="IPR036901">
    <property type="entry name" value="Asp/Orn_carbamoylTrfase_sf"/>
</dbReference>
<dbReference type="InterPro" id="IPR006131">
    <property type="entry name" value="Asp_carbamoyltransf_Asp/Orn-bd"/>
</dbReference>
<dbReference type="InterPro" id="IPR002292">
    <property type="entry name" value="Orn/put_carbamltrans"/>
</dbReference>
<dbReference type="InterPro" id="IPR024904">
    <property type="entry name" value="OTCase_ArgI"/>
</dbReference>
<dbReference type="NCBIfam" id="TIGR00658">
    <property type="entry name" value="orni_carb_tr"/>
    <property type="match status" value="1"/>
</dbReference>
<dbReference type="NCBIfam" id="NF002470">
    <property type="entry name" value="PRK01713.1"/>
    <property type="match status" value="1"/>
</dbReference>
<dbReference type="PANTHER" id="PTHR45753:SF2">
    <property type="entry name" value="ORNITHINE CARBAMOYLTRANSFERASE"/>
    <property type="match status" value="1"/>
</dbReference>
<dbReference type="PANTHER" id="PTHR45753">
    <property type="entry name" value="ORNITHINE CARBAMOYLTRANSFERASE, MITOCHONDRIAL"/>
    <property type="match status" value="1"/>
</dbReference>
<dbReference type="Pfam" id="PF00185">
    <property type="entry name" value="OTCace"/>
    <property type="match status" value="1"/>
</dbReference>
<dbReference type="Pfam" id="PF02729">
    <property type="entry name" value="OTCace_N"/>
    <property type="match status" value="1"/>
</dbReference>
<dbReference type="PRINTS" id="PR00100">
    <property type="entry name" value="AOTCASE"/>
</dbReference>
<dbReference type="PRINTS" id="PR00102">
    <property type="entry name" value="OTCASE"/>
</dbReference>
<dbReference type="SUPFAM" id="SSF53671">
    <property type="entry name" value="Aspartate/ornithine carbamoyltransferase"/>
    <property type="match status" value="1"/>
</dbReference>
<dbReference type="PROSITE" id="PS00097">
    <property type="entry name" value="CARBAMOYLTRANSFERASE"/>
    <property type="match status" value="1"/>
</dbReference>
<sequence length="336" mass="37911">MAFNIHNRNLLSLEHHTTRELRYLLDLSRDLKRAKYTGTEQQHLKGNNIALIFEKTSTRTRCAFEVAAYDQGANVTYIDPNSSQIGHKESMKDTARVLGRMYDAIEYRGFKQEIVEELAKFAGVPVFNGLTDEYHPTQMIADVLTMREHSDKPLHDISYAYLGDARNNMGNSLLLIGAKLGMDVRIAAPKALWPHDDLVERCKQYAEESGARITLTEDPKAAVKGVDFVHTDVWVSMGEPIEAWGERIKQLKPYQVNAELMKSTGNPRTKFMHCLPAFHNSETKVGKQIAEQYPDLANGIEVTDDVFESPACIAFEQAENRMHTIKAILVSTLADL</sequence>
<evidence type="ECO:0000250" key="1"/>
<evidence type="ECO:0000255" key="2">
    <source>
        <dbReference type="HAMAP-Rule" id="MF_01109"/>
    </source>
</evidence>
<evidence type="ECO:0000305" key="3"/>